<protein>
    <recommendedName>
        <fullName>Sonic hedgehog protein</fullName>
        <shortName>SHH</shortName>
    </recommendedName>
</protein>
<evidence type="ECO:0000250" key="1"/>
<evidence type="ECO:0000250" key="2">
    <source>
        <dbReference type="UniProtKB" id="Q15465"/>
    </source>
</evidence>
<evidence type="ECO:0000305" key="3"/>
<organism>
    <name type="scientific">Rasbora paviana</name>
    <name type="common">Sidestripe rasbora</name>
    <dbReference type="NCBI Taxonomy" id="38659"/>
    <lineage>
        <taxon>Eukaryota</taxon>
        <taxon>Metazoa</taxon>
        <taxon>Chordata</taxon>
        <taxon>Craniata</taxon>
        <taxon>Vertebrata</taxon>
        <taxon>Euteleostomi</taxon>
        <taxon>Actinopterygii</taxon>
        <taxon>Neopterygii</taxon>
        <taxon>Teleostei</taxon>
        <taxon>Ostariophysi</taxon>
        <taxon>Cypriniformes</taxon>
        <taxon>Danionidae</taxon>
        <taxon>Rasborinae</taxon>
        <taxon>Rasbora</taxon>
    </lineage>
</organism>
<name>SHH_RASPA</name>
<comment type="function">
    <text evidence="1">Intercellular signal essential for a variety of patterning events during development. Signal produced by the notochord that induces somite patterning, dorso-ventral patterning of the brain and early patterning of the developing eyes. Displays floor plate-inducing activity. Binds to the patched (PTC) receptor, which functions in association with smoothened (SMO), to activate the transcription of target genes. In the absence of SHH, PTC represses the constitutive signaling activity of SMO (By similarity).</text>
</comment>
<comment type="subunit">
    <text evidence="1">N-product is active as a multimer.</text>
</comment>
<comment type="subcellular location">
    <subcellularLocation>
        <location evidence="1">Secreted</location>
    </subcellularLocation>
    <subcellularLocation>
        <location evidence="1">Cell membrane</location>
    </subcellularLocation>
    <text evidence="1">Sonic hedgehog protein C-product: Secreted, extracellular space. Sonic hedgehog protein N-product: Cell membrane; Lipid-anchor. The C-terminal peptide diffuses from the cell, while the N-product either remains associated with lipid rafts at the cell surface, or forms freely diffusible active multimers with its hydrophobic lipid-modified N- and C-termini buried inside.</text>
</comment>
<comment type="domain">
    <text evidence="1">The sonic hedgehog protein N-product binds calcium and zinc ions; this stabilizes the protein fold and is essential for protein-protein interactions mediated by this domain.</text>
</comment>
<comment type="PTM">
    <text>The C-terminal domain displays an autoproteolysis activity and a cholesterol transferase activity. Both activities result in the cleavage of the full-length protein and covalent attachment of a cholesterol moiety to the C-terminal of the newly generated N-terminal fragment (N-product). The N-product is the active species in both local and long-range signaling, whereas the C-product has no signaling activity.</text>
</comment>
<comment type="PTM">
    <text evidence="1">Cholesterylation is required for N-product targeting to lipid rafts and multimerization.</text>
</comment>
<comment type="PTM">
    <text evidence="1">N-palmitoylation is required for N-product multimerization and full activity.</text>
</comment>
<comment type="similarity">
    <text evidence="3">Belongs to the hedgehog family.</text>
</comment>
<proteinExistence type="inferred from homology"/>
<sequence>YGQRRHPKKLTPLAYKQFIPNVAEKTLGASGRYEGKITRNSERFKELTPNYNPDIIFKDEENTVMNQWPGVKLRVTEGWDEDGHHFEESLHYEGRAVDITTSDRDKSKYGTLSRLAVEAGF</sequence>
<gene>
    <name type="primary">shh</name>
</gene>
<reference key="1">
    <citation type="journal article" date="1996" name="Proc. Natl. Acad. Sci. U.S.A.">
        <title>Evolutionary analyses of hedgehog and Hoxd-10 genes in fish species closely related to the zebrafish.</title>
        <authorList>
            <person name="Zardoya R."/>
            <person name="Abouheif E."/>
            <person name="Meyer A."/>
        </authorList>
    </citation>
    <scope>NUCLEOTIDE SEQUENCE [GENOMIC DNA]</scope>
    <source>
        <tissue>Muscle</tissue>
    </source>
</reference>
<keyword id="KW-0068">Autocatalytic cleavage</keyword>
<keyword id="KW-0106">Calcium</keyword>
<keyword id="KW-1003">Cell membrane</keyword>
<keyword id="KW-0217">Developmental protein</keyword>
<keyword id="KW-0378">Hydrolase</keyword>
<keyword id="KW-0449">Lipoprotein</keyword>
<keyword id="KW-0472">Membrane</keyword>
<keyword id="KW-0479">Metal-binding</keyword>
<keyword id="KW-0564">Palmitate</keyword>
<keyword id="KW-0645">Protease</keyword>
<keyword id="KW-0964">Secreted</keyword>
<keyword id="KW-0862">Zinc</keyword>
<dbReference type="EMBL" id="U51343">
    <property type="protein sequence ID" value="AAB38580.1"/>
    <property type="molecule type" value="Genomic_DNA"/>
</dbReference>
<dbReference type="EMBL" id="U51362">
    <property type="protein sequence ID" value="AAB38599.1"/>
    <property type="molecule type" value="Genomic_DNA"/>
</dbReference>
<dbReference type="SMR" id="P79869"/>
<dbReference type="GO" id="GO:0005615">
    <property type="term" value="C:extracellular space"/>
    <property type="evidence" value="ECO:0007669"/>
    <property type="project" value="TreeGrafter"/>
</dbReference>
<dbReference type="GO" id="GO:0005886">
    <property type="term" value="C:plasma membrane"/>
    <property type="evidence" value="ECO:0007669"/>
    <property type="project" value="UniProtKB-SubCell"/>
</dbReference>
<dbReference type="GO" id="GO:0005509">
    <property type="term" value="F:calcium ion binding"/>
    <property type="evidence" value="ECO:0007669"/>
    <property type="project" value="TreeGrafter"/>
</dbReference>
<dbReference type="GO" id="GO:0005113">
    <property type="term" value="F:patched binding"/>
    <property type="evidence" value="ECO:0007669"/>
    <property type="project" value="TreeGrafter"/>
</dbReference>
<dbReference type="GO" id="GO:0008233">
    <property type="term" value="F:peptidase activity"/>
    <property type="evidence" value="ECO:0007669"/>
    <property type="project" value="UniProtKB-KW"/>
</dbReference>
<dbReference type="GO" id="GO:0048513">
    <property type="term" value="P:animal organ development"/>
    <property type="evidence" value="ECO:0007669"/>
    <property type="project" value="UniProtKB-ARBA"/>
</dbReference>
<dbReference type="GO" id="GO:0048468">
    <property type="term" value="P:cell development"/>
    <property type="evidence" value="ECO:0007669"/>
    <property type="project" value="UniProtKB-ARBA"/>
</dbReference>
<dbReference type="GO" id="GO:0001708">
    <property type="term" value="P:cell fate specification"/>
    <property type="evidence" value="ECO:0007669"/>
    <property type="project" value="TreeGrafter"/>
</dbReference>
<dbReference type="GO" id="GO:0007267">
    <property type="term" value="P:cell-cell signaling"/>
    <property type="evidence" value="ECO:0007669"/>
    <property type="project" value="InterPro"/>
</dbReference>
<dbReference type="GO" id="GO:0007417">
    <property type="term" value="P:central nervous system development"/>
    <property type="evidence" value="ECO:0007669"/>
    <property type="project" value="UniProtKB-ARBA"/>
</dbReference>
<dbReference type="GO" id="GO:0030182">
    <property type="term" value="P:neuron differentiation"/>
    <property type="evidence" value="ECO:0007669"/>
    <property type="project" value="UniProtKB-ARBA"/>
</dbReference>
<dbReference type="GO" id="GO:0006508">
    <property type="term" value="P:proteolysis"/>
    <property type="evidence" value="ECO:0007669"/>
    <property type="project" value="UniProtKB-KW"/>
</dbReference>
<dbReference type="GO" id="GO:0010468">
    <property type="term" value="P:regulation of gene expression"/>
    <property type="evidence" value="ECO:0007669"/>
    <property type="project" value="TreeGrafter"/>
</dbReference>
<dbReference type="GO" id="GO:0007224">
    <property type="term" value="P:smoothened signaling pathway"/>
    <property type="evidence" value="ECO:0007669"/>
    <property type="project" value="TreeGrafter"/>
</dbReference>
<dbReference type="GO" id="GO:0009888">
    <property type="term" value="P:tissue development"/>
    <property type="evidence" value="ECO:0007669"/>
    <property type="project" value="UniProtKB-ARBA"/>
</dbReference>
<dbReference type="Gene3D" id="3.30.1380.10">
    <property type="match status" value="1"/>
</dbReference>
<dbReference type="InterPro" id="IPR001657">
    <property type="entry name" value="Hedgehog"/>
</dbReference>
<dbReference type="InterPro" id="IPR009045">
    <property type="entry name" value="Hedgehog_sig/DD-Pept_Zn-bd_sf"/>
</dbReference>
<dbReference type="InterPro" id="IPR050387">
    <property type="entry name" value="Hedgehog_Signaling"/>
</dbReference>
<dbReference type="InterPro" id="IPR000320">
    <property type="entry name" value="Hedgehog_signalling_dom"/>
</dbReference>
<dbReference type="PANTHER" id="PTHR11889">
    <property type="entry name" value="HEDGEHOG"/>
    <property type="match status" value="1"/>
</dbReference>
<dbReference type="PANTHER" id="PTHR11889:SF36">
    <property type="entry name" value="SONIC HEDGEHOG PROTEIN"/>
    <property type="match status" value="1"/>
</dbReference>
<dbReference type="Pfam" id="PF01085">
    <property type="entry name" value="HH_signal"/>
    <property type="match status" value="1"/>
</dbReference>
<dbReference type="PRINTS" id="PR00632">
    <property type="entry name" value="SONICHHOG"/>
</dbReference>
<dbReference type="SUPFAM" id="SSF55166">
    <property type="entry name" value="Hedgehog/DD-peptidase"/>
    <property type="match status" value="1"/>
</dbReference>
<feature type="chain" id="PRO_0000058737" description="Sonic hedgehog protein">
    <location>
        <begin position="1" status="less than"/>
        <end position="121" status="greater than"/>
    </location>
</feature>
<feature type="binding site" evidence="2">
    <location>
        <position position="60"/>
    </location>
    <ligand>
        <name>Ca(2+)</name>
        <dbReference type="ChEBI" id="CHEBI:29108"/>
        <label>1</label>
    </ligand>
</feature>
<feature type="binding site" evidence="2">
    <location>
        <position position="61"/>
    </location>
    <ligand>
        <name>Ca(2+)</name>
        <dbReference type="ChEBI" id="CHEBI:29108"/>
        <label>1</label>
    </ligand>
</feature>
<feature type="binding site" evidence="2">
    <location>
        <position position="61"/>
    </location>
    <ligand>
        <name>Ca(2+)</name>
        <dbReference type="ChEBI" id="CHEBI:29108"/>
        <label>2</label>
    </ligand>
</feature>
<feature type="binding site" evidence="2">
    <location>
        <position position="76"/>
    </location>
    <ligand>
        <name>Ca(2+)</name>
        <dbReference type="ChEBI" id="CHEBI:29108"/>
        <label>1</label>
    </ligand>
</feature>
<feature type="binding site" evidence="2">
    <location>
        <position position="77"/>
    </location>
    <ligand>
        <name>Ca(2+)</name>
        <dbReference type="ChEBI" id="CHEBI:29108"/>
        <label>1</label>
    </ligand>
</feature>
<feature type="binding site" evidence="2">
    <location>
        <position position="77"/>
    </location>
    <ligand>
        <name>Ca(2+)</name>
        <dbReference type="ChEBI" id="CHEBI:29108"/>
        <label>2</label>
    </ligand>
</feature>
<feature type="binding site" evidence="2">
    <location>
        <position position="80"/>
    </location>
    <ligand>
        <name>Ca(2+)</name>
        <dbReference type="ChEBI" id="CHEBI:29108"/>
        <label>2</label>
    </ligand>
</feature>
<feature type="binding site" evidence="2">
    <location>
        <position position="82"/>
    </location>
    <ligand>
        <name>Ca(2+)</name>
        <dbReference type="ChEBI" id="CHEBI:29108"/>
        <label>2</label>
    </ligand>
</feature>
<feature type="binding site" evidence="2">
    <location>
        <position position="91"/>
    </location>
    <ligand>
        <name>Zn(2+)</name>
        <dbReference type="ChEBI" id="CHEBI:29105"/>
    </ligand>
</feature>
<feature type="binding site" evidence="2">
    <location>
        <position position="98"/>
    </location>
    <ligand>
        <name>Zn(2+)</name>
        <dbReference type="ChEBI" id="CHEBI:29105"/>
    </ligand>
</feature>
<feature type="non-consecutive residues" evidence="3">
    <location>
        <begin position="63"/>
        <end position="64"/>
    </location>
</feature>
<feature type="non-terminal residue">
    <location>
        <position position="1"/>
    </location>
</feature>
<feature type="non-terminal residue">
    <location>
        <position position="121"/>
    </location>
</feature>
<accession>P79869</accession>
<accession>P79870</accession>